<name>SSN8_YEAST</name>
<accession>P47821</accession>
<accession>D6W1F3</accession>
<reference key="1">
    <citation type="journal article" date="1995" name="Nature">
        <title>A kinase-cyclin pair in the RNA polymerase II holoenzyme.</title>
        <authorList>
            <person name="Liao S.-M."/>
            <person name="Zhang J."/>
            <person name="Jeffery D.A."/>
            <person name="Koleske A.J."/>
            <person name="Thompson C.M."/>
            <person name="Chao D.M."/>
            <person name="Viljoen M."/>
            <person name="van Vuuren H.J.J."/>
            <person name="Young R.A."/>
        </authorList>
    </citation>
    <scope>NUCLEOTIDE SEQUENCE [GENOMIC DNA]</scope>
    <scope>FUNCTION</scope>
    <scope>INTERACTION WITH SSN3</scope>
    <source>
        <strain>ATCC 204508 / S288c</strain>
    </source>
</reference>
<reference key="2">
    <citation type="submission" date="1995-04" db="EMBL/GenBank/DDBJ databases">
        <title>UME3, a new C-type cyclin involved in the developmental switch between meiotic and mitotic cell division in S. cerevisiae.</title>
        <authorList>
            <person name="Smith J.B."/>
            <person name="Mallory M.J."/>
            <person name="Strich R."/>
        </authorList>
    </citation>
    <scope>NUCLEOTIDE SEQUENCE [GENOMIC DNA]</scope>
    <source>
        <strain>ATCC 204508 / S288c</strain>
    </source>
</reference>
<reference key="3">
    <citation type="journal article" date="1995" name="Proc. Natl. Acad. Sci. U.S.A.">
        <title>Cyclin-dependent protein kinase and cyclin homologs SSN3 and SSN8 contribute to transcriptional control in yeast.</title>
        <authorList>
            <person name="Kuchin S."/>
            <person name="Yeghiayan P."/>
            <person name="Carlson M."/>
        </authorList>
    </citation>
    <scope>NUCLEOTIDE SEQUENCE [GENOMIC DNA]</scope>
    <source>
        <strain>ATCC 204508 / S288c</strain>
    </source>
</reference>
<reference key="4">
    <citation type="journal article" date="1997" name="Nature">
        <title>The nucleotide sequence of Saccharomyces cerevisiae chromosome XIV and its evolutionary implications.</title>
        <authorList>
            <person name="Philippsen P."/>
            <person name="Kleine K."/>
            <person name="Poehlmann R."/>
            <person name="Duesterhoeft A."/>
            <person name="Hamberg K."/>
            <person name="Hegemann J.H."/>
            <person name="Obermaier B."/>
            <person name="Urrestarazu L.A."/>
            <person name="Aert R."/>
            <person name="Albermann K."/>
            <person name="Altmann R."/>
            <person name="Andre B."/>
            <person name="Baladron V."/>
            <person name="Ballesta J.P.G."/>
            <person name="Becam A.-M."/>
            <person name="Beinhauer J.D."/>
            <person name="Boskovic J."/>
            <person name="Buitrago M.J."/>
            <person name="Bussereau F."/>
            <person name="Coster F."/>
            <person name="Crouzet M."/>
            <person name="D'Angelo M."/>
            <person name="Dal Pero F."/>
            <person name="De Antoni A."/>
            <person name="del Rey F."/>
            <person name="Doignon F."/>
            <person name="Domdey H."/>
            <person name="Dubois E."/>
            <person name="Fiedler T.A."/>
            <person name="Fleig U."/>
            <person name="Floeth M."/>
            <person name="Fritz C."/>
            <person name="Gaillardin C."/>
            <person name="Garcia-Cantalejo J.M."/>
            <person name="Glansdorff N."/>
            <person name="Goffeau A."/>
            <person name="Gueldener U."/>
            <person name="Herbert C.J."/>
            <person name="Heumann K."/>
            <person name="Heuss-Neitzel D."/>
            <person name="Hilbert H."/>
            <person name="Hinni K."/>
            <person name="Iraqui Houssaini I."/>
            <person name="Jacquet M."/>
            <person name="Jimenez A."/>
            <person name="Jonniaux J.-L."/>
            <person name="Karpfinger-Hartl L."/>
            <person name="Lanfranchi G."/>
            <person name="Lepingle A."/>
            <person name="Levesque H."/>
            <person name="Lyck R."/>
            <person name="Maftahi M."/>
            <person name="Mallet L."/>
            <person name="Maurer C.T.C."/>
            <person name="Messenguy F."/>
            <person name="Mewes H.-W."/>
            <person name="Moestl D."/>
            <person name="Nasr F."/>
            <person name="Nicaud J.-M."/>
            <person name="Niedenthal R.K."/>
            <person name="Pandolfo D."/>
            <person name="Pierard A."/>
            <person name="Piravandi E."/>
            <person name="Planta R.J."/>
            <person name="Pohl T.M."/>
            <person name="Purnelle B."/>
            <person name="Rebischung C."/>
            <person name="Remacha M.A."/>
            <person name="Revuelta J.L."/>
            <person name="Rinke M."/>
            <person name="Saiz J.E."/>
            <person name="Sartorello F."/>
            <person name="Scherens B."/>
            <person name="Sen-Gupta M."/>
            <person name="Soler-Mira A."/>
            <person name="Urbanus J.H.M."/>
            <person name="Valle G."/>
            <person name="Van Dyck L."/>
            <person name="Verhasselt P."/>
            <person name="Vierendeels F."/>
            <person name="Vissers S."/>
            <person name="Voet M."/>
            <person name="Volckaert G."/>
            <person name="Wach A."/>
            <person name="Wambutt R."/>
            <person name="Wedler H."/>
            <person name="Zollner A."/>
            <person name="Hani J."/>
        </authorList>
    </citation>
    <scope>NUCLEOTIDE SEQUENCE [LARGE SCALE GENOMIC DNA]</scope>
    <source>
        <strain>ATCC 204508 / S288c</strain>
    </source>
</reference>
<reference key="5">
    <citation type="journal article" date="2014" name="G3 (Bethesda)">
        <title>The reference genome sequence of Saccharomyces cerevisiae: Then and now.</title>
        <authorList>
            <person name="Engel S.R."/>
            <person name="Dietrich F.S."/>
            <person name="Fisk D.G."/>
            <person name="Binkley G."/>
            <person name="Balakrishnan R."/>
            <person name="Costanzo M.C."/>
            <person name="Dwight S.S."/>
            <person name="Hitz B.C."/>
            <person name="Karra K."/>
            <person name="Nash R.S."/>
            <person name="Weng S."/>
            <person name="Wong E.D."/>
            <person name="Lloyd P."/>
            <person name="Skrzypek M.S."/>
            <person name="Miyasato S.R."/>
            <person name="Simison M."/>
            <person name="Cherry J.M."/>
        </authorList>
    </citation>
    <scope>GENOME REANNOTATION</scope>
    <source>
        <strain>ATCC 204508 / S288c</strain>
    </source>
</reference>
<reference key="6">
    <citation type="journal article" date="1998" name="Mol. Cell">
        <title>Temporal regulation of RNA polymerase II by Srb10 and Kin28 cyclin-dependent kinases.</title>
        <authorList>
            <person name="Hengartner C.J."/>
            <person name="Myer V.E."/>
            <person name="Liao S.-M."/>
            <person name="Wilson C.J."/>
            <person name="Koh S.S."/>
            <person name="Young R.A."/>
        </authorList>
    </citation>
    <scope>FUNCTION</scope>
    <scope>INTERACTION WITH SSN3</scope>
</reference>
<reference key="7">
    <citation type="journal article" date="2001" name="J. Biol. Chem.">
        <title>The structural and functional organization of the yeast mediator complex.</title>
        <authorList>
            <person name="Kang J.S."/>
            <person name="Kim S.H."/>
            <person name="Hwang M.S."/>
            <person name="Han S.J."/>
            <person name="Lee Y.C."/>
            <person name="Kim Y.-J."/>
        </authorList>
    </citation>
    <scope>INTERACTION WITH MED1 AND MED4</scope>
    <scope>FUNCTION OF THE MEDIATOR COMPLEX</scope>
    <scope>INTERACTION OF THE MEDIATOR COMPLEX WITH RNA POLYMERASE II</scope>
</reference>
<reference key="8">
    <citation type="journal article" date="2001" name="Proc. Natl. Acad. Sci. U.S.A.">
        <title>Interaction of a transcriptional repressor with the RNA polymerase II holoenzyme plays a crucial role in repression.</title>
        <authorList>
            <person name="Zaman Z."/>
            <person name="Ansari A.Z."/>
            <person name="Koh S.S."/>
            <person name="Young R."/>
            <person name="Ptashne M."/>
        </authorList>
    </citation>
    <scope>FUNCTION</scope>
    <scope>INTERACTION WITH SSN3</scope>
</reference>
<reference key="9">
    <citation type="journal article" date="2002" name="J. Biol. Chem.">
        <title>A complex of the Srb8, -9, -10, and -11 transcriptional regulatory proteins from yeast.</title>
        <authorList>
            <person name="Borggrefe T."/>
            <person name="Davis R."/>
            <person name="Erdjument-Bromage H."/>
            <person name="Tempst P."/>
            <person name="Kornberg R.D."/>
        </authorList>
    </citation>
    <scope>IDENTIFICATION IN THE SRB8-11 COMPLEX</scope>
    <scope>FUNCTION OF THE SRB8-11 COMPLEX</scope>
</reference>
<reference key="10">
    <citation type="journal article" date="2003" name="Eukaryot. Cell">
        <title>Ask10p mediates the oxidative stress-induced destruction of the Saccharomyces cerevisiae C-type cyclin Ume3p/Srb11p.</title>
        <authorList>
            <person name="Cohen T.J."/>
            <person name="Lee K."/>
            <person name="Rutkowski L.H."/>
            <person name="Strich R."/>
        </authorList>
    </citation>
    <scope>INTERACTION WITH ASK10</scope>
</reference>
<reference key="11">
    <citation type="journal article" date="2003" name="Nature">
        <title>Srb10/Cdk8 regulates yeast filamentous growth by phosphorylating the transcription factor Ste12.</title>
        <authorList>
            <person name="Nelson C."/>
            <person name="Goto S."/>
            <person name="Lund K."/>
            <person name="Hung W."/>
            <person name="Sadowski I."/>
        </authorList>
    </citation>
    <scope>FUNCTION</scope>
</reference>
<reference key="12">
    <citation type="journal article" date="2004" name="Nucleic Acids Res.">
        <title>A high resolution protein interaction map of the yeast Mediator complex.</title>
        <authorList>
            <person name="Guglielmi B."/>
            <person name="van Berkum N.L."/>
            <person name="Klapholz B."/>
            <person name="Bijma T."/>
            <person name="Boube M."/>
            <person name="Boschiero C."/>
            <person name="Bourbon H.-M."/>
            <person name="Holstege F.C.P."/>
            <person name="Werner M."/>
        </authorList>
    </citation>
    <scope>TOPOLOGY OF THE MEDIATOR COMPLEX</scope>
</reference>
<reference key="13">
    <citation type="journal article" date="2005" name="J. Biol. Chem.">
        <title>Mediator and TFIIH govern carboxyl-terminal domain-dependent transcription in yeast extracts.</title>
        <authorList>
            <person name="Nair D."/>
            <person name="Kim Y."/>
            <person name="Myers L.C."/>
        </authorList>
    </citation>
    <scope>FUNCTION OF THE MEDIATOR COMPLEX</scope>
</reference>
<reference key="14">
    <citation type="journal article" date="2005" name="Mol. Cell">
        <title>Mediator expression profiling epistasis reveals a signal transduction pathway with antagonistic submodules and highly specific downstream targets.</title>
        <authorList>
            <person name="van de Peppel J."/>
            <person name="Kettelarij N."/>
            <person name="van Bakel H."/>
            <person name="Kockelkorn T.T.J.P."/>
            <person name="van Leenen D."/>
            <person name="Holstege F.C.P."/>
        </authorList>
    </citation>
    <scope>FUNCTION</scope>
</reference>
<reference key="15">
    <citation type="journal article" date="2005" name="Mol. Cell. Biol.">
        <title>The Saccharomyces cerevisiae Srb8-Srb11 complex functions with the SAGA complex during Gal4-activated transcription.</title>
        <authorList>
            <person name="Larschan E."/>
            <person name="Winston F."/>
        </authorList>
    </citation>
    <scope>FUNCTION OF THE SRB8-11 COMPLEX</scope>
</reference>
<reference key="16">
    <citation type="journal article" date="2005" name="Proc. Natl. Acad. Sci. U.S.A.">
        <title>Transcriptional activating regions target attached substrates to a cyclin-dependent kinase.</title>
        <authorList>
            <person name="Ansari A.Z."/>
            <person name="Ogirala A."/>
            <person name="Ptashne M."/>
        </authorList>
    </citation>
    <scope>FUNCTION</scope>
</reference>
<reference key="17">
    <citation type="journal article" date="2006" name="Mol. Cell">
        <title>Genome-wide location of the coactivator mediator: binding without activation and transient Cdk8 interaction on DNA.</title>
        <authorList>
            <person name="Andrau J.-C."/>
            <person name="van de Pasch L."/>
            <person name="Lijnzaad P."/>
            <person name="Bijma T."/>
            <person name="Koerkamp M.G."/>
            <person name="van de Peppel J."/>
            <person name="Werner M."/>
            <person name="Holstege F.C.P."/>
        </authorList>
    </citation>
    <scope>FUNCTION</scope>
    <scope>SUBCELLULAR LOCATION</scope>
</reference>
<comment type="function">
    <text evidence="1 2 3 4 6 7 8 9 10 11 12">Component of the SRB8-11 complex. The SRB8-11 complex is a regulatory module of the Mediator complex which is itself involved in regulation of basal and activated RNA polymerase II-dependent transcription. The SRB8-11 complex may be involved in the transcriptional repression of a subset of genes regulated by Mediator. It may inhibit the association of the Mediator complex with RNA polymerase II to form the holoenzyme complex. The SRB8-11 complex phosphorylates the C-terminal domain (CTD) of the largest subunit of RNA polymerase II RPB1 at serines 2 and 5. The SSN3/SRB10 and SSN8/SRB11 kinase-cyclin pair may also positively and negatively regulate numerous transcriptional activators in response to changes in nutritional and physiological conditions.</text>
</comment>
<comment type="subunit">
    <text evidence="1 2 3 5 11 12">Component of the SRB8-11 complex which consists of SRB8, SSN2/SRB9, SSN3/SRB10 and SSN8/SRB11. The SRB8-11 complex associates with the Mediator complex. The SSN3/SRB10 and SSN8/SRB11 kinase-cyclin pair also associate with the RNA polymerase II holoenzyme. Interacts with ASK10.</text>
</comment>
<comment type="subcellular location">
    <subcellularLocation>
        <location evidence="10">Nucleus</location>
    </subcellularLocation>
</comment>
<comment type="similarity">
    <text evidence="13">Belongs to the cyclin family. Cyclin C subfamily.</text>
</comment>
<feature type="chain" id="PRO_0000080428" description="RNA polymerase II holoenzyme cyclin-like subunit">
    <location>
        <begin position="1"/>
        <end position="323"/>
    </location>
</feature>
<feature type="domain" description="Cyclin N-terminal">
    <location>
        <begin position="45"/>
        <end position="176"/>
    </location>
</feature>
<gene>
    <name type="primary">SSN8</name>
    <name type="synonym">GIG3</name>
    <name type="synonym">NUT9</name>
    <name type="synonym">SRB11</name>
    <name type="synonym">UME3</name>
    <name type="ordered locus">YNL025C</name>
    <name type="ORF">N2805</name>
</gene>
<organism>
    <name type="scientific">Saccharomyces cerevisiae (strain ATCC 204508 / S288c)</name>
    <name type="common">Baker's yeast</name>
    <dbReference type="NCBI Taxonomy" id="559292"/>
    <lineage>
        <taxon>Eukaryota</taxon>
        <taxon>Fungi</taxon>
        <taxon>Dikarya</taxon>
        <taxon>Ascomycota</taxon>
        <taxon>Saccharomycotina</taxon>
        <taxon>Saccharomycetes</taxon>
        <taxon>Saccharomycetales</taxon>
        <taxon>Saccharomycetaceae</taxon>
        <taxon>Saccharomyces</taxon>
    </lineage>
</organism>
<keyword id="KW-0002">3D-structure</keyword>
<keyword id="KW-0010">Activator</keyword>
<keyword id="KW-0195">Cyclin</keyword>
<keyword id="KW-0539">Nucleus</keyword>
<keyword id="KW-1185">Reference proteome</keyword>
<keyword id="KW-0678">Repressor</keyword>
<keyword id="KW-0804">Transcription</keyword>
<keyword id="KW-0805">Transcription regulation</keyword>
<protein>
    <recommendedName>
        <fullName>RNA polymerase II holoenzyme cyclin-like subunit</fullName>
    </recommendedName>
    <alternativeName>
        <fullName>Suppressor of RNA polymerase B 11</fullName>
    </alternativeName>
</protein>
<sequence length="323" mass="37791">MSGSFWTSTQRHHWQYTKASLAKERQKLWLLECQLFPQGLNIVMDSKQNGIEQSITKNIPITHRDLHYDKDYNLRIYCYFLIMKLGRRLNIRQYALATAHIYLSRFLIKASVREINLYMLVTTCVYLACKVEECPQYIRTLVSEARTLWPEFIPPDPTKVTEFEFYLLEELESYLIVHHPYQSLKQIVQVLKQPPFQITLSSDDLQNCWSLINDSYINDVHLLYPPHIIAVACLFITISIHGKPTKGSSLASAASEAIRDPKNSSSPVQIAFNRFMAESLVDLEEVMDTIQEQITLYDHWDKYHEQWIKFLLHTLYLRPASAI</sequence>
<dbReference type="EMBL" id="U20221">
    <property type="protein sequence ID" value="AAA69820.1"/>
    <property type="molecule type" value="Genomic_DNA"/>
</dbReference>
<dbReference type="EMBL" id="U16248">
    <property type="protein sequence ID" value="AAA64270.1"/>
    <property type="molecule type" value="Genomic_DNA"/>
</dbReference>
<dbReference type="EMBL" id="U20635">
    <property type="protein sequence ID" value="AAA85714.1"/>
    <property type="molecule type" value="Genomic_DNA"/>
</dbReference>
<dbReference type="EMBL" id="Z71301">
    <property type="protein sequence ID" value="CAA95887.1"/>
    <property type="molecule type" value="Genomic_DNA"/>
</dbReference>
<dbReference type="EMBL" id="BK006947">
    <property type="protein sequence ID" value="DAA10519.1"/>
    <property type="molecule type" value="Genomic_DNA"/>
</dbReference>
<dbReference type="PIR" id="S59373">
    <property type="entry name" value="S59373"/>
</dbReference>
<dbReference type="RefSeq" id="NP_014373.3">
    <property type="nucleotide sequence ID" value="NM_001182864.3"/>
</dbReference>
<dbReference type="PDB" id="7KPV">
    <property type="method" value="EM"/>
    <property type="resolution" value="3.80 A"/>
    <property type="chains" value="B=1-323"/>
</dbReference>
<dbReference type="PDB" id="7KPX">
    <property type="method" value="EM"/>
    <property type="resolution" value="4.40 A"/>
    <property type="chains" value="B=1-323"/>
</dbReference>
<dbReference type="PDBsum" id="7KPV"/>
<dbReference type="PDBsum" id="7KPX"/>
<dbReference type="EMDB" id="EMD-22989"/>
<dbReference type="EMDB" id="EMD-22991"/>
<dbReference type="SMR" id="P47821"/>
<dbReference type="BioGRID" id="35801">
    <property type="interactions" value="419"/>
</dbReference>
<dbReference type="ComplexPortal" id="CPX-1853">
    <property type="entry name" value="CKM complex"/>
</dbReference>
<dbReference type="DIP" id="DIP-2007N"/>
<dbReference type="FunCoup" id="P47821">
    <property type="interactions" value="1177"/>
</dbReference>
<dbReference type="IntAct" id="P47821">
    <property type="interactions" value="58"/>
</dbReference>
<dbReference type="MINT" id="P47821"/>
<dbReference type="STRING" id="4932.YNL025C"/>
<dbReference type="iPTMnet" id="P47821"/>
<dbReference type="PaxDb" id="4932-YNL025C"/>
<dbReference type="PeptideAtlas" id="P47821"/>
<dbReference type="EnsemblFungi" id="YNL025C_mRNA">
    <property type="protein sequence ID" value="YNL025C"/>
    <property type="gene ID" value="YNL025C"/>
</dbReference>
<dbReference type="GeneID" id="855706"/>
<dbReference type="KEGG" id="sce:YNL025C"/>
<dbReference type="AGR" id="SGD:S000004970"/>
<dbReference type="SGD" id="S000004970">
    <property type="gene designation" value="SSN8"/>
</dbReference>
<dbReference type="VEuPathDB" id="FungiDB:YNL025C"/>
<dbReference type="eggNOG" id="KOG0794">
    <property type="taxonomic scope" value="Eukaryota"/>
</dbReference>
<dbReference type="GeneTree" id="ENSGT00940000167379"/>
<dbReference type="HOGENOM" id="CLU_034754_2_1_1"/>
<dbReference type="InParanoid" id="P47821"/>
<dbReference type="OMA" id="CLLHPPH"/>
<dbReference type="OrthoDB" id="10266018at2759"/>
<dbReference type="BioCyc" id="YEAST:G3O-33063-MONOMER"/>
<dbReference type="BioGRID-ORCS" id="855706">
    <property type="hits" value="0 hits in 10 CRISPR screens"/>
</dbReference>
<dbReference type="PRO" id="PR:P47821"/>
<dbReference type="Proteomes" id="UP000002311">
    <property type="component" value="Chromosome XIV"/>
</dbReference>
<dbReference type="RNAct" id="P47821">
    <property type="molecule type" value="protein"/>
</dbReference>
<dbReference type="GO" id="GO:1990508">
    <property type="term" value="C:CKM complex"/>
    <property type="evidence" value="ECO:0000353"/>
    <property type="project" value="ComplexPortal"/>
</dbReference>
<dbReference type="GO" id="GO:0016592">
    <property type="term" value="C:mediator complex"/>
    <property type="evidence" value="ECO:0000314"/>
    <property type="project" value="SGD"/>
</dbReference>
<dbReference type="GO" id="GO:0005634">
    <property type="term" value="C:nucleus"/>
    <property type="evidence" value="ECO:0000318"/>
    <property type="project" value="GO_Central"/>
</dbReference>
<dbReference type="GO" id="GO:0016538">
    <property type="term" value="F:cyclin-dependent protein serine/threonine kinase regulator activity"/>
    <property type="evidence" value="ECO:0000314"/>
    <property type="project" value="SGD"/>
</dbReference>
<dbReference type="GO" id="GO:0000979">
    <property type="term" value="F:RNA polymerase II core promoter sequence-specific DNA binding"/>
    <property type="evidence" value="ECO:0000314"/>
    <property type="project" value="SGD"/>
</dbReference>
<dbReference type="GO" id="GO:0034605">
    <property type="term" value="P:cellular response to heat"/>
    <property type="evidence" value="ECO:0000314"/>
    <property type="project" value="SGD"/>
</dbReference>
<dbReference type="GO" id="GO:0051321">
    <property type="term" value="P:meiotic cell cycle"/>
    <property type="evidence" value="ECO:0000315"/>
    <property type="project" value="SGD"/>
</dbReference>
<dbReference type="GO" id="GO:0000122">
    <property type="term" value="P:negative regulation of transcription by RNA polymerase II"/>
    <property type="evidence" value="ECO:0000315"/>
    <property type="project" value="SGD"/>
</dbReference>
<dbReference type="GO" id="GO:0000411">
    <property type="term" value="P:positive regulation of transcription by galactose"/>
    <property type="evidence" value="ECO:0000315"/>
    <property type="project" value="SGD"/>
</dbReference>
<dbReference type="GO" id="GO:0045944">
    <property type="term" value="P:positive regulation of transcription by RNA polymerase II"/>
    <property type="evidence" value="ECO:0000314"/>
    <property type="project" value="SGD"/>
</dbReference>
<dbReference type="CDD" id="cd20513">
    <property type="entry name" value="CYCLIN_CCNC_rpt1"/>
    <property type="match status" value="1"/>
</dbReference>
<dbReference type="CDD" id="cd20546">
    <property type="entry name" value="CYCLIN_SpCG1C_ScCTK2-like_rpt2"/>
    <property type="match status" value="1"/>
</dbReference>
<dbReference type="FunFam" id="1.10.472.10:FF:000117">
    <property type="entry name" value="Mediator complex subunit"/>
    <property type="match status" value="1"/>
</dbReference>
<dbReference type="FunFam" id="1.10.472.10:FF:000077">
    <property type="entry name" value="RNA polymerase II holoenzyme cyclin-like subunit"/>
    <property type="match status" value="1"/>
</dbReference>
<dbReference type="Gene3D" id="1.10.472.10">
    <property type="entry name" value="Cyclin-like"/>
    <property type="match status" value="2"/>
</dbReference>
<dbReference type="InterPro" id="IPR013763">
    <property type="entry name" value="Cyclin-like_dom"/>
</dbReference>
<dbReference type="InterPro" id="IPR036915">
    <property type="entry name" value="Cyclin-like_sf"/>
</dbReference>
<dbReference type="InterPro" id="IPR043198">
    <property type="entry name" value="Cyclin/Ssn8"/>
</dbReference>
<dbReference type="InterPro" id="IPR006671">
    <property type="entry name" value="Cyclin_N"/>
</dbReference>
<dbReference type="PANTHER" id="PTHR10026">
    <property type="entry name" value="CYCLIN"/>
    <property type="match status" value="1"/>
</dbReference>
<dbReference type="Pfam" id="PF00134">
    <property type="entry name" value="Cyclin_N"/>
    <property type="match status" value="1"/>
</dbReference>
<dbReference type="PIRSF" id="PIRSF028758">
    <property type="entry name" value="Cyclin, C/H/G types"/>
    <property type="match status" value="1"/>
</dbReference>
<dbReference type="SMART" id="SM00385">
    <property type="entry name" value="CYCLIN"/>
    <property type="match status" value="2"/>
</dbReference>
<dbReference type="SUPFAM" id="SSF47954">
    <property type="entry name" value="Cyclin-like"/>
    <property type="match status" value="2"/>
</dbReference>
<proteinExistence type="evidence at protein level"/>
<evidence type="ECO:0000269" key="1">
    <source>
    </source>
</evidence>
<evidence type="ECO:0000269" key="2">
    <source>
    </source>
</evidence>
<evidence type="ECO:0000269" key="3">
    <source>
    </source>
</evidence>
<evidence type="ECO:0000269" key="4">
    <source>
    </source>
</evidence>
<evidence type="ECO:0000269" key="5">
    <source>
    </source>
</evidence>
<evidence type="ECO:0000269" key="6">
    <source>
    </source>
</evidence>
<evidence type="ECO:0000269" key="7">
    <source>
    </source>
</evidence>
<evidence type="ECO:0000269" key="8">
    <source>
    </source>
</evidence>
<evidence type="ECO:0000269" key="9">
    <source>
    </source>
</evidence>
<evidence type="ECO:0000269" key="10">
    <source>
    </source>
</evidence>
<evidence type="ECO:0000269" key="11">
    <source>
    </source>
</evidence>
<evidence type="ECO:0000269" key="12">
    <source>
    </source>
</evidence>
<evidence type="ECO:0000305" key="13"/>